<sequence>MTDLAGPTITPNLQLVYVSNVERSTDFYRFIFKKEPVFVTPRYVAFPSSGDALFAIWSGGEEPVAEIPRFSEIGIMLPTGEDVDKLFNEWTKQKSHQIIVIKEPYTDVFGRTFLISDPDGHIIRVCPLD</sequence>
<evidence type="ECO:0000255" key="1">
    <source>
        <dbReference type="PROSITE-ProRule" id="PRU01163"/>
    </source>
</evidence>
<evidence type="ECO:0000269" key="2">
    <source>
    </source>
</evidence>
<evidence type="ECO:0000269" key="3">
    <source>
    </source>
</evidence>
<evidence type="ECO:0000305" key="4"/>
<evidence type="ECO:0000305" key="5">
    <source>
    </source>
</evidence>
<evidence type="ECO:0000312" key="6">
    <source>
        <dbReference type="EMBL" id="AAN40889.1"/>
    </source>
</evidence>
<evidence type="ECO:0000312" key="7">
    <source>
        <dbReference type="PDB" id="3SK1"/>
    </source>
</evidence>
<evidence type="ECO:0007744" key="8">
    <source>
        <dbReference type="PDB" id="3SK2"/>
    </source>
</evidence>
<evidence type="ECO:0007829" key="9">
    <source>
        <dbReference type="PDB" id="3SK2"/>
    </source>
</evidence>
<gene>
    <name evidence="6" type="primary">ehpR</name>
</gene>
<protein>
    <recommendedName>
        <fullName>Phenazine antibiotic resistance protein EhpR</fullName>
    </recommendedName>
</protein>
<name>EHPR_ENTAG</name>
<dbReference type="EMBL" id="AF451953">
    <property type="protein sequence ID" value="AAN40889.1"/>
    <property type="molecule type" value="Genomic_DNA"/>
</dbReference>
<dbReference type="RefSeq" id="WP_249655108.1">
    <property type="nucleotide sequence ID" value="NZ_SGQI01000008.1"/>
</dbReference>
<dbReference type="PDB" id="3SK1">
    <property type="method" value="X-ray"/>
    <property type="resolution" value="2.15 A"/>
    <property type="chains" value="A/B/C/D=1-129"/>
</dbReference>
<dbReference type="PDB" id="3SK2">
    <property type="method" value="X-ray"/>
    <property type="resolution" value="1.01 A"/>
    <property type="chains" value="A/B=1-129"/>
</dbReference>
<dbReference type="PDBsum" id="3SK1"/>
<dbReference type="PDBsum" id="3SK2"/>
<dbReference type="SMR" id="Q8GPH6"/>
<dbReference type="EvolutionaryTrace" id="Q8GPH6"/>
<dbReference type="GO" id="GO:0043177">
    <property type="term" value="F:organic acid binding"/>
    <property type="evidence" value="ECO:0000314"/>
    <property type="project" value="UniProtKB"/>
</dbReference>
<dbReference type="GO" id="GO:0042803">
    <property type="term" value="F:protein homodimerization activity"/>
    <property type="evidence" value="ECO:0000314"/>
    <property type="project" value="UniProtKB"/>
</dbReference>
<dbReference type="GO" id="GO:0046677">
    <property type="term" value="P:response to antibiotic"/>
    <property type="evidence" value="ECO:0000314"/>
    <property type="project" value="UniProtKB"/>
</dbReference>
<dbReference type="Gene3D" id="3.30.720.110">
    <property type="match status" value="1"/>
</dbReference>
<dbReference type="Gene3D" id="3.30.720.120">
    <property type="match status" value="1"/>
</dbReference>
<dbReference type="InterPro" id="IPR029068">
    <property type="entry name" value="Glyas_Bleomycin-R_OHBP_Dase"/>
</dbReference>
<dbReference type="InterPro" id="IPR004360">
    <property type="entry name" value="Glyas_Fos-R_dOase_dom"/>
</dbReference>
<dbReference type="InterPro" id="IPR026275">
    <property type="entry name" value="Glyoxalase/dOase/EhpR"/>
</dbReference>
<dbReference type="InterPro" id="IPR037523">
    <property type="entry name" value="VOC"/>
</dbReference>
<dbReference type="Pfam" id="PF00903">
    <property type="entry name" value="Glyoxalase"/>
    <property type="match status" value="1"/>
</dbReference>
<dbReference type="PIRSF" id="PIRSF039020">
    <property type="entry name" value="EhpR"/>
    <property type="match status" value="1"/>
</dbReference>
<dbReference type="SUPFAM" id="SSF54593">
    <property type="entry name" value="Glyoxalase/Bleomycin resistance protein/Dihydroxybiphenyl dioxygenase"/>
    <property type="match status" value="1"/>
</dbReference>
<dbReference type="PROSITE" id="PS51819">
    <property type="entry name" value="VOC"/>
    <property type="match status" value="1"/>
</dbReference>
<accession>Q8GPH6</accession>
<feature type="chain" id="PRO_0000429274" description="Phenazine antibiotic resistance protein EhpR">
    <location>
        <begin position="1"/>
        <end position="129"/>
    </location>
</feature>
<feature type="domain" description="VOC" evidence="1">
    <location>
        <begin position="10"/>
        <end position="128"/>
    </location>
</feature>
<feature type="binding site" evidence="5 8">
    <location>
        <begin position="42"/>
        <end position="43"/>
    </location>
    <ligand>
        <name>D-alanylgriseoluteate</name>
        <dbReference type="ChEBI" id="CHEBI:167053"/>
    </ligand>
</feature>
<feature type="binding site" evidence="5 8">
    <location>
        <position position="57"/>
    </location>
    <ligand>
        <name>D-alanylgriseoluteate</name>
        <dbReference type="ChEBI" id="CHEBI:167053"/>
    </ligand>
</feature>
<feature type="strand" evidence="9">
    <location>
        <begin position="13"/>
        <end position="17"/>
    </location>
</feature>
<feature type="helix" evidence="9">
    <location>
        <begin position="21"/>
        <end position="32"/>
    </location>
</feature>
<feature type="strand" evidence="9">
    <location>
        <begin position="37"/>
        <end position="39"/>
    </location>
</feature>
<feature type="strand" evidence="9">
    <location>
        <begin position="41"/>
        <end position="47"/>
    </location>
</feature>
<feature type="strand" evidence="9">
    <location>
        <begin position="53"/>
        <end position="60"/>
    </location>
</feature>
<feature type="strand" evidence="9">
    <location>
        <begin position="71"/>
        <end position="79"/>
    </location>
</feature>
<feature type="helix" evidence="9">
    <location>
        <begin position="80"/>
        <end position="92"/>
    </location>
</feature>
<feature type="strand" evidence="9">
    <location>
        <begin position="94"/>
        <end position="96"/>
    </location>
</feature>
<feature type="strand" evidence="9">
    <location>
        <begin position="99"/>
        <end position="107"/>
    </location>
</feature>
<feature type="strand" evidence="9">
    <location>
        <begin position="110"/>
        <end position="116"/>
    </location>
</feature>
<feature type="strand" evidence="9">
    <location>
        <begin position="122"/>
        <end position="127"/>
    </location>
</feature>
<keyword id="KW-0002">3D-structure</keyword>
<keyword id="KW-0046">Antibiotic resistance</keyword>
<keyword id="KW-0143">Chaperone</keyword>
<proteinExistence type="evidence at protein level"/>
<reference evidence="4 6" key="1">
    <citation type="journal article" date="2002" name="Mol. Microbiol.">
        <title>Characterization of a novel phenazine antibiotic gene cluster in Erwinia herbicola Eh1087.</title>
        <authorList>
            <person name="Giddens S.R."/>
            <person name="Feng Y."/>
            <person name="Mahanty H.K."/>
        </authorList>
    </citation>
    <scope>NUCLEOTIDE SEQUENCE [GENOMIC DNA]</scope>
    <scope>OPERON STRUCTURE</scope>
    <scope>FUNCTION</scope>
    <scope>DISRUPTION PHENOTYPE</scope>
    <source>
        <strain evidence="6">Eh1087</strain>
    </source>
</reference>
<reference evidence="4 7" key="2">
    <citation type="journal article" date="2011" name="BMC Struct. Biol.">
        <title>Atomic resolution structure of EhpR: phenazine resistance in Enterobacter agglomerans Eh1087 follows principles of bleomycin/mitomycin C resistance in other bacteria.</title>
        <authorList>
            <person name="Yu S."/>
            <person name="Vit A."/>
            <person name="Devenish S."/>
            <person name="Mahanty H.K."/>
            <person name="Itzen A."/>
            <person name="Goody R.S."/>
            <person name="Blankenfeldt W."/>
        </authorList>
    </citation>
    <scope>X-RAY CRYSTALLOGRAPHY (1.01 ANGSTROMS) OF APOPROTEIN AND IN COMPLEX WITH GRISEOLUTEIC ACID</scope>
    <scope>FUNCTION</scope>
    <scope>SUBUNIT</scope>
    <source>
        <strain evidence="3">Eh1087</strain>
    </source>
</reference>
<organism>
    <name type="scientific">Enterobacter agglomerans</name>
    <name type="common">Erwinia herbicola</name>
    <name type="synonym">Pantoea agglomerans</name>
    <dbReference type="NCBI Taxonomy" id="549"/>
    <lineage>
        <taxon>Bacteria</taxon>
        <taxon>Pseudomonadati</taxon>
        <taxon>Pseudomonadota</taxon>
        <taxon>Gammaproteobacteria</taxon>
        <taxon>Enterobacterales</taxon>
        <taxon>Erwiniaceae</taxon>
        <taxon>Pantoea</taxon>
        <taxon>Pantoea agglomerans group</taxon>
    </lineage>
</organism>
<comment type="function">
    <text evidence="2 3">Required for resistance to the phenazine antibiotic D-alanylgriseoluteic acid (AGA), an antibiotic produced by E.agglomerans itself, and thus protects the bacterium against phenazine toxicity. Probably binds AGA and acts as a chaperone that works in tandem with a membrane transporter for subsequent antibiotic secretion.</text>
</comment>
<comment type="subunit">
    <text evidence="3">Homodimer.</text>
</comment>
<comment type="disruption phenotype">
    <text evidence="2">Loss of D-alanylgriseoluteic acid resistance.</text>
</comment>